<comment type="function">
    <text>Crystallins are the dominant structural components of the vertebrate eye lens.</text>
</comment>
<comment type="subunit">
    <text evidence="1">Homo/heterodimer, or complexes of higher-order. The structure of beta-crystallin oligomers seems to be stabilized through interactions between the N-terminal arms (By similarity).</text>
</comment>
<comment type="domain">
    <text>Has a two-domain beta-structure, folded into four very similar Greek key motifs.</text>
</comment>
<comment type="mass spectrometry" mass="23292.0" method="Electrospray" evidence="4"/>
<comment type="similarity">
    <text evidence="5">Belongs to the beta/gamma-crystallin family.</text>
</comment>
<organism>
    <name type="scientific">Rattus norvegicus</name>
    <name type="common">Rat</name>
    <dbReference type="NCBI Taxonomy" id="10116"/>
    <lineage>
        <taxon>Eukaryota</taxon>
        <taxon>Metazoa</taxon>
        <taxon>Chordata</taxon>
        <taxon>Craniata</taxon>
        <taxon>Vertebrata</taxon>
        <taxon>Euteleostomi</taxon>
        <taxon>Mammalia</taxon>
        <taxon>Eutheria</taxon>
        <taxon>Euarchontoglires</taxon>
        <taxon>Glires</taxon>
        <taxon>Rodentia</taxon>
        <taxon>Myomorpha</taxon>
        <taxon>Muroidea</taxon>
        <taxon>Muridae</taxon>
        <taxon>Murinae</taxon>
        <taxon>Rattus</taxon>
    </lineage>
</organism>
<gene>
    <name type="primary">Crybb2</name>
</gene>
<protein>
    <recommendedName>
        <fullName>Beta-crystallin B2</fullName>
    </recommendedName>
    <alternativeName>
        <fullName>Beta-B2 crystallin</fullName>
    </alternativeName>
    <alternativeName>
        <fullName>Beta-crystallin Bp</fullName>
    </alternativeName>
</protein>
<evidence type="ECO:0000250" key="1"/>
<evidence type="ECO:0000250" key="2">
    <source>
        <dbReference type="UniProtKB" id="P02522"/>
    </source>
</evidence>
<evidence type="ECO:0000255" key="3">
    <source>
        <dbReference type="PROSITE-ProRule" id="PRU00028"/>
    </source>
</evidence>
<evidence type="ECO:0000269" key="4">
    <source>
    </source>
</evidence>
<evidence type="ECO:0000305" key="5"/>
<evidence type="ECO:0007829" key="6">
    <source>
        <dbReference type="PDB" id="1BD7"/>
    </source>
</evidence>
<feature type="initiator methionine" description="Removed" evidence="2">
    <location>
        <position position="1"/>
    </location>
</feature>
<feature type="chain" id="PRO_0000057556" description="Beta-crystallin B2">
    <location>
        <begin position="2"/>
        <end position="205"/>
    </location>
</feature>
<feature type="domain" description="Beta/gamma crystallin 'Greek key' 1" evidence="3">
    <location>
        <begin position="17"/>
        <end position="56"/>
    </location>
</feature>
<feature type="domain" description="Beta/gamma crystallin 'Greek key' 2" evidence="3">
    <location>
        <begin position="57"/>
        <end position="101"/>
    </location>
</feature>
<feature type="domain" description="Beta/gamma crystallin 'Greek key' 3" evidence="3">
    <location>
        <begin position="107"/>
        <end position="148"/>
    </location>
</feature>
<feature type="domain" description="Beta/gamma crystallin 'Greek key' 4" evidence="3">
    <location>
        <begin position="149"/>
        <end position="191"/>
    </location>
</feature>
<feature type="region of interest" description="N-terminal arm">
    <location>
        <begin position="2"/>
        <end position="16"/>
    </location>
</feature>
<feature type="region of interest" description="Connecting peptide">
    <location>
        <begin position="102"/>
        <end position="106"/>
    </location>
</feature>
<feature type="region of interest" description="C-terminal arm">
    <location>
        <begin position="193"/>
        <end position="205"/>
    </location>
</feature>
<feature type="modified residue" description="N-acetylalanine" evidence="2">
    <location>
        <position position="2"/>
    </location>
</feature>
<feature type="strand" evidence="6">
    <location>
        <begin position="108"/>
        <end position="114"/>
    </location>
</feature>
<feature type="turn" evidence="6">
    <location>
        <begin position="115"/>
        <end position="117"/>
    </location>
</feature>
<feature type="strand" evidence="6">
    <location>
        <begin position="118"/>
        <end position="126"/>
    </location>
</feature>
<feature type="helix" evidence="6">
    <location>
        <begin position="133"/>
        <end position="135"/>
    </location>
</feature>
<feature type="strand" evidence="6">
    <location>
        <begin position="143"/>
        <end position="146"/>
    </location>
</feature>
<feature type="strand" evidence="6">
    <location>
        <begin position="148"/>
        <end position="156"/>
    </location>
</feature>
<feature type="helix" evidence="6">
    <location>
        <begin position="157"/>
        <end position="159"/>
    </location>
</feature>
<feature type="strand" evidence="6">
    <location>
        <begin position="160"/>
        <end position="166"/>
    </location>
</feature>
<feature type="strand" evidence="6">
    <location>
        <begin position="168"/>
        <end position="173"/>
    </location>
</feature>
<feature type="helix" evidence="6">
    <location>
        <begin position="174"/>
        <end position="177"/>
    </location>
</feature>
<feature type="strand" evidence="6">
    <location>
        <begin position="180"/>
        <end position="182"/>
    </location>
</feature>
<feature type="strand" evidence="6">
    <location>
        <begin position="186"/>
        <end position="190"/>
    </location>
</feature>
<proteinExistence type="evidence at protein level"/>
<sequence length="205" mass="23381">MASDHQTQAGKPQPLNPKIIIFEQENFQGHSHELSGPCPNLKETGMEKAGSVLVQAGPWVGYEQANCKGEQFVFEKGEYPRWDSWTSSRRTDSLSSLRPIKVDSQEHKIILYENPNFTGKKMEIVDDDVPSFHAHGYQEKVSSVRVQSGTWVGYQYPGYRGLQYLLEKGDYKDNSDFGAPHPQVQSVRRIRDMQWHQRGAFHPSS</sequence>
<dbReference type="EMBL" id="X16072">
    <property type="protein sequence ID" value="CAA34204.1"/>
    <property type="molecule type" value="mRNA"/>
</dbReference>
<dbReference type="PIR" id="S05015">
    <property type="entry name" value="S05015"/>
</dbReference>
<dbReference type="RefSeq" id="NP_037069.1">
    <property type="nucleotide sequence ID" value="NM_012937.2"/>
</dbReference>
<dbReference type="RefSeq" id="XP_017453762.1">
    <property type="nucleotide sequence ID" value="XM_017598273.1"/>
</dbReference>
<dbReference type="PDB" id="1BD7">
    <property type="method" value="X-ray"/>
    <property type="resolution" value="2.78 A"/>
    <property type="chains" value="A/B=15-192"/>
</dbReference>
<dbReference type="PDBsum" id="1BD7"/>
<dbReference type="PCDDB" id="P62697"/>
<dbReference type="SMR" id="P62697"/>
<dbReference type="FunCoup" id="P62697">
    <property type="interactions" value="8"/>
</dbReference>
<dbReference type="STRING" id="10116.ENSRNOP00000067708"/>
<dbReference type="PhosphoSitePlus" id="P62697"/>
<dbReference type="PaxDb" id="10116-ENSRNOP00000067708"/>
<dbReference type="Ensembl" id="ENSRNOT00000072683.2">
    <property type="protein sequence ID" value="ENSRNOP00000067708.1"/>
    <property type="gene ID" value="ENSRNOG00000050023.2"/>
</dbReference>
<dbReference type="GeneID" id="25422"/>
<dbReference type="KEGG" id="rno:25422"/>
<dbReference type="AGR" id="RGD:2417"/>
<dbReference type="CTD" id="1415"/>
<dbReference type="RGD" id="2417">
    <property type="gene designation" value="Crybb2"/>
</dbReference>
<dbReference type="eggNOG" id="ENOG502QVM6">
    <property type="taxonomic scope" value="Eukaryota"/>
</dbReference>
<dbReference type="GeneTree" id="ENSGT00940000160048"/>
<dbReference type="HOGENOM" id="CLU_081883_0_1_1"/>
<dbReference type="InParanoid" id="P62697"/>
<dbReference type="OMA" id="FRPIKQD"/>
<dbReference type="OrthoDB" id="8525367at2759"/>
<dbReference type="PhylomeDB" id="P62697"/>
<dbReference type="EvolutionaryTrace" id="P62697"/>
<dbReference type="PRO" id="PR:P62697"/>
<dbReference type="Proteomes" id="UP000002494">
    <property type="component" value="Chromosome 12"/>
</dbReference>
<dbReference type="Bgee" id="ENSRNOG00000050023">
    <property type="expression patterns" value="Expressed in colon and 2 other cell types or tissues"/>
</dbReference>
<dbReference type="GO" id="GO:0042802">
    <property type="term" value="F:identical protein binding"/>
    <property type="evidence" value="ECO:0000266"/>
    <property type="project" value="RGD"/>
</dbReference>
<dbReference type="GO" id="GO:0005212">
    <property type="term" value="F:structural constituent of eye lens"/>
    <property type="evidence" value="ECO:0000266"/>
    <property type="project" value="RGD"/>
</dbReference>
<dbReference type="GO" id="GO:0043010">
    <property type="term" value="P:camera-type eye development"/>
    <property type="evidence" value="ECO:0000270"/>
    <property type="project" value="RGD"/>
</dbReference>
<dbReference type="GO" id="GO:0002088">
    <property type="term" value="P:lens development in camera-type eye"/>
    <property type="evidence" value="ECO:0000318"/>
    <property type="project" value="GO_Central"/>
</dbReference>
<dbReference type="GO" id="GO:0007601">
    <property type="term" value="P:visual perception"/>
    <property type="evidence" value="ECO:0000266"/>
    <property type="project" value="RGD"/>
</dbReference>
<dbReference type="FunFam" id="2.60.20.10:FF:000005">
    <property type="entry name" value="Crystallin, beta B1"/>
    <property type="match status" value="1"/>
</dbReference>
<dbReference type="FunFam" id="2.60.20.10:FF:000002">
    <property type="entry name" value="Crystallin, beta B2"/>
    <property type="match status" value="1"/>
</dbReference>
<dbReference type="Gene3D" id="2.60.20.10">
    <property type="entry name" value="Crystallins"/>
    <property type="match status" value="2"/>
</dbReference>
<dbReference type="InterPro" id="IPR050252">
    <property type="entry name" value="Beta/Gamma-Crystallin"/>
</dbReference>
<dbReference type="InterPro" id="IPR001064">
    <property type="entry name" value="Beta/gamma_crystallin"/>
</dbReference>
<dbReference type="InterPro" id="IPR011024">
    <property type="entry name" value="G_crystallin-like"/>
</dbReference>
<dbReference type="PANTHER" id="PTHR11818:SF11">
    <property type="entry name" value="BETA-CRYSTALLIN B2"/>
    <property type="match status" value="1"/>
</dbReference>
<dbReference type="PANTHER" id="PTHR11818">
    <property type="entry name" value="BETA/GAMMA CRYSTALLIN"/>
    <property type="match status" value="1"/>
</dbReference>
<dbReference type="Pfam" id="PF00030">
    <property type="entry name" value="Crystall"/>
    <property type="match status" value="2"/>
</dbReference>
<dbReference type="PRINTS" id="PR01367">
    <property type="entry name" value="BGCRYSTALLIN"/>
</dbReference>
<dbReference type="SMART" id="SM00247">
    <property type="entry name" value="XTALbg"/>
    <property type="match status" value="2"/>
</dbReference>
<dbReference type="SUPFAM" id="SSF49695">
    <property type="entry name" value="gamma-Crystallin-like"/>
    <property type="match status" value="1"/>
</dbReference>
<dbReference type="PROSITE" id="PS50915">
    <property type="entry name" value="CRYSTALLIN_BETA_GAMMA"/>
    <property type="match status" value="4"/>
</dbReference>
<accession>P62697</accession>
<accession>P19942</accession>
<accession>P26775</accession>
<reference key="1">
    <citation type="journal article" date="1989" name="Eur. J. Biochem.">
        <title>Crystallin gene expression during rat lens development.</title>
        <authorList>
            <person name="Aarts H.J.M."/>
            <person name="Lubsen N.H."/>
            <person name="Schoenmakers J.G.G."/>
        </authorList>
    </citation>
    <scope>NUCLEOTIDE SEQUENCE [MRNA]</scope>
</reference>
<reference key="2">
    <citation type="submission" date="1998-05" db="EMBL/GenBank/DDBJ databases">
        <authorList>
            <person name="Lubsen N.H."/>
        </authorList>
    </citation>
    <scope>SEQUENCE REVISION</scope>
</reference>
<reference key="3">
    <citation type="journal article" date="1993" name="FEBS Lett.">
        <title>Beta-crystallins insolubilized by calpain II in vitro contain cleavage sites similar to beta-crystallins insolubilized during cataract.</title>
        <authorList>
            <person name="David L.L."/>
            <person name="Shearer T.R."/>
        </authorList>
    </citation>
    <scope>PROTEIN SEQUENCE OF 9-14</scope>
</reference>
<reference key="4">
    <citation type="journal article" date="2002" name="Invest. Ophthalmol. Vis. Sci.">
        <title>Lens proteomics: analysis of rat crystallin sequences and two-dimensional electrophoresis map.</title>
        <authorList>
            <person name="Lampi K.J."/>
            <person name="Shih M."/>
            <person name="Ueda Y."/>
            <person name="Shearer T.R."/>
            <person name="David L.L."/>
        </authorList>
    </citation>
    <scope>MASS SPECTROMETRY</scope>
    <source>
        <strain>Sprague-Dawley</strain>
        <tissue>Lens</tissue>
    </source>
</reference>
<reference key="5">
    <citation type="journal article" date="1998" name="Protein Sci.">
        <title>Circular permutation of betaB2-crystallin changes the hierarchy of domain assembly.</title>
        <authorList>
            <person name="Wright G."/>
            <person name="Basak A.K."/>
            <person name="Wieligmann K."/>
            <person name="Mayr E.M."/>
            <person name="Slingsby C."/>
        </authorList>
    </citation>
    <scope>X-RAY CRYSTALLOGRAPHY (2.78 ANGSTROMS)</scope>
</reference>
<keyword id="KW-0002">3D-structure</keyword>
<keyword id="KW-0007">Acetylation</keyword>
<keyword id="KW-0903">Direct protein sequencing</keyword>
<keyword id="KW-0273">Eye lens protein</keyword>
<keyword id="KW-1185">Reference proteome</keyword>
<keyword id="KW-0677">Repeat</keyword>
<name>CRBB2_RAT</name>